<reference key="1">
    <citation type="journal article" date="1999" name="Nat. Genet.">
        <title>Comparative genomes of Chlamydia pneumoniae and C. trachomatis.</title>
        <authorList>
            <person name="Kalman S."/>
            <person name="Mitchell W.P."/>
            <person name="Marathe R."/>
            <person name="Lammel C.J."/>
            <person name="Fan J."/>
            <person name="Hyman R.W."/>
            <person name="Olinger L."/>
            <person name="Grimwood J."/>
            <person name="Davis R.W."/>
            <person name="Stephens R.S."/>
        </authorList>
    </citation>
    <scope>NUCLEOTIDE SEQUENCE [LARGE SCALE GENOMIC DNA]</scope>
    <source>
        <strain>CWL029</strain>
    </source>
</reference>
<reference key="2">
    <citation type="journal article" date="2000" name="Nucleic Acids Res.">
        <title>Genome sequences of Chlamydia trachomatis MoPn and Chlamydia pneumoniae AR39.</title>
        <authorList>
            <person name="Read T.D."/>
            <person name="Brunham R.C."/>
            <person name="Shen C."/>
            <person name="Gill S.R."/>
            <person name="Heidelberg J.F."/>
            <person name="White O."/>
            <person name="Hickey E.K."/>
            <person name="Peterson J.D."/>
            <person name="Utterback T.R."/>
            <person name="Berry K.J."/>
            <person name="Bass S."/>
            <person name="Linher K.D."/>
            <person name="Weidman J.F."/>
            <person name="Khouri H.M."/>
            <person name="Craven B."/>
            <person name="Bowman C."/>
            <person name="Dodson R.J."/>
            <person name="Gwinn M.L."/>
            <person name="Nelson W.C."/>
            <person name="DeBoy R.T."/>
            <person name="Kolonay J.F."/>
            <person name="McClarty G."/>
            <person name="Salzberg S.L."/>
            <person name="Eisen J.A."/>
            <person name="Fraser C.M."/>
        </authorList>
    </citation>
    <scope>NUCLEOTIDE SEQUENCE [LARGE SCALE GENOMIC DNA]</scope>
    <source>
        <strain>AR39</strain>
    </source>
</reference>
<reference key="3">
    <citation type="journal article" date="2000" name="Nucleic Acids Res.">
        <title>Comparison of whole genome sequences of Chlamydia pneumoniae J138 from Japan and CWL029 from USA.</title>
        <authorList>
            <person name="Shirai M."/>
            <person name="Hirakawa H."/>
            <person name="Kimoto M."/>
            <person name="Tabuchi M."/>
            <person name="Kishi F."/>
            <person name="Ouchi K."/>
            <person name="Shiba T."/>
            <person name="Ishii K."/>
            <person name="Hattori M."/>
            <person name="Kuhara S."/>
            <person name="Nakazawa T."/>
        </authorList>
    </citation>
    <scope>NUCLEOTIDE SEQUENCE [LARGE SCALE GENOMIC DNA]</scope>
    <source>
        <strain>J138</strain>
    </source>
</reference>
<reference key="4">
    <citation type="submission" date="2002-05" db="EMBL/GenBank/DDBJ databases">
        <title>The genome sequence of Chlamydia pneumoniae TW183 and comparison with other Chlamydia strains based on whole genome sequence analysis.</title>
        <authorList>
            <person name="Geng M.M."/>
            <person name="Schuhmacher A."/>
            <person name="Muehldorfer I."/>
            <person name="Bensch K.W."/>
            <person name="Schaefer K.P."/>
            <person name="Schneider S."/>
            <person name="Pohl T."/>
            <person name="Essig A."/>
            <person name="Marre R."/>
            <person name="Melchers K."/>
        </authorList>
    </citation>
    <scope>NUCLEOTIDE SEQUENCE [LARGE SCALE GENOMIC DNA]</scope>
    <source>
        <strain>TW-183</strain>
    </source>
</reference>
<sequence>MSKIVYKFGGTSLATAENICLVCDIICKDKPSFVVVSAIAGVTDLLVDFCSSSLREREEVLRKIEGKHEEIVKNLAIPFPVSTWTSRLLPYLQHLEISDLDFARILSLGEDISASLVRAVCSTRGWDLGFLEARSVILTDDSYRRASPNLDLMKAHWHQLELNQPSYIIQGFIGSNGLGETVLLGRGGSDYSATLIAELARATEVRIYTDVNGIYTMDPKVISDAQRIPELSFEEMQNLASFGAKVLYPPMLFPCMRAGIPIFVTSTFDPEKGGTWVYAVDKSVSYEPRIKALSLSQYQSFCSVDYTVLGCGGLEEILGILESHGIDPELMIAQNNVVGFVMDDDIISQEAQEHLVDVLSLSSVTRLHHSVALITMIGDNLSSPKVVSTITEKLRGFQGPVFCFCQSSMALSFVVASELAEGIIEELHNDYVKQKAIVAT</sequence>
<gene>
    <name type="primary">lysC</name>
    <name type="ordered locus">CPn_1049</name>
    <name type="ordered locus">CP_0803</name>
    <name type="ordered locus">CpB1090</name>
</gene>
<feature type="chain" id="PRO_0000066674" description="Aspartokinase">
    <location>
        <begin position="1"/>
        <end position="440"/>
    </location>
</feature>
<feature type="sequence conflict" description="In Ref. 2; AAF38602." evidence="1" ref="2">
    <original>R</original>
    <variation>S</variation>
    <location>
        <position position="145"/>
    </location>
</feature>
<comment type="catalytic activity">
    <reaction>
        <text>L-aspartate + ATP = 4-phospho-L-aspartate + ADP</text>
        <dbReference type="Rhea" id="RHEA:23776"/>
        <dbReference type="ChEBI" id="CHEBI:29991"/>
        <dbReference type="ChEBI" id="CHEBI:30616"/>
        <dbReference type="ChEBI" id="CHEBI:57535"/>
        <dbReference type="ChEBI" id="CHEBI:456216"/>
        <dbReference type="EC" id="2.7.2.4"/>
    </reaction>
</comment>
<comment type="pathway">
    <text>Amino-acid biosynthesis; L-lysine biosynthesis via DAP pathway; (S)-tetrahydrodipicolinate from L-aspartate: step 1/4.</text>
</comment>
<comment type="pathway">
    <text>Amino-acid biosynthesis; L-methionine biosynthesis via de novo pathway; L-homoserine from L-aspartate: step 1/3.</text>
</comment>
<comment type="pathway">
    <text>Amino-acid biosynthesis; L-threonine biosynthesis; L-threonine from L-aspartate: step 1/5.</text>
</comment>
<comment type="similarity">
    <text evidence="1">Belongs to the aspartokinase family.</text>
</comment>
<organism>
    <name type="scientific">Chlamydia pneumoniae</name>
    <name type="common">Chlamydophila pneumoniae</name>
    <dbReference type="NCBI Taxonomy" id="83558"/>
    <lineage>
        <taxon>Bacteria</taxon>
        <taxon>Pseudomonadati</taxon>
        <taxon>Chlamydiota</taxon>
        <taxon>Chlamydiia</taxon>
        <taxon>Chlamydiales</taxon>
        <taxon>Chlamydiaceae</taxon>
        <taxon>Chlamydia/Chlamydophila group</taxon>
        <taxon>Chlamydia</taxon>
    </lineage>
</organism>
<keyword id="KW-0028">Amino-acid biosynthesis</keyword>
<keyword id="KW-0067">ATP-binding</keyword>
<keyword id="KW-0220">Diaminopimelate biosynthesis</keyword>
<keyword id="KW-0418">Kinase</keyword>
<keyword id="KW-0457">Lysine biosynthesis</keyword>
<keyword id="KW-0547">Nucleotide-binding</keyword>
<keyword id="KW-0808">Transferase</keyword>
<protein>
    <recommendedName>
        <fullName>Aspartokinase</fullName>
        <ecNumber>2.7.2.4</ecNumber>
    </recommendedName>
    <alternativeName>
        <fullName>Aspartate kinase</fullName>
    </alternativeName>
</protein>
<dbReference type="EC" id="2.7.2.4"/>
<dbReference type="EMBL" id="AE001363">
    <property type="protein sequence ID" value="AAD19186.1"/>
    <property type="molecule type" value="Genomic_DNA"/>
</dbReference>
<dbReference type="EMBL" id="AE002161">
    <property type="protein sequence ID" value="AAF38602.1"/>
    <property type="molecule type" value="Genomic_DNA"/>
</dbReference>
<dbReference type="EMBL" id="BA000008">
    <property type="protein sequence ID" value="BAA99256.1"/>
    <property type="molecule type" value="Genomic_DNA"/>
</dbReference>
<dbReference type="EMBL" id="AE009440">
    <property type="protein sequence ID" value="AAP99019.1"/>
    <property type="molecule type" value="Genomic_DNA"/>
</dbReference>
<dbReference type="PIR" id="F86621">
    <property type="entry name" value="F86621"/>
</dbReference>
<dbReference type="PIR" id="G81537">
    <property type="entry name" value="G81537"/>
</dbReference>
<dbReference type="PIR" id="H72002">
    <property type="entry name" value="H72002"/>
</dbReference>
<dbReference type="RefSeq" id="NP_225243.1">
    <property type="nucleotide sequence ID" value="NC_000922.1"/>
</dbReference>
<dbReference type="RefSeq" id="WP_010883682.1">
    <property type="nucleotide sequence ID" value="NZ_LN847257.1"/>
</dbReference>
<dbReference type="SMR" id="Q9Z6L0"/>
<dbReference type="STRING" id="406984.CPK_ORF00476"/>
<dbReference type="GeneID" id="45051107"/>
<dbReference type="KEGG" id="cpa:CP_0803"/>
<dbReference type="KEGG" id="cpj:lysC"/>
<dbReference type="KEGG" id="cpn:CPn_1049"/>
<dbReference type="KEGG" id="cpt:CpB1090"/>
<dbReference type="PATRIC" id="fig|115713.3.peg.1148"/>
<dbReference type="eggNOG" id="COG0527">
    <property type="taxonomic scope" value="Bacteria"/>
</dbReference>
<dbReference type="HOGENOM" id="CLU_009116_6_0_0"/>
<dbReference type="OrthoDB" id="9799110at2"/>
<dbReference type="UniPathway" id="UPA00034">
    <property type="reaction ID" value="UER00015"/>
</dbReference>
<dbReference type="UniPathway" id="UPA00050">
    <property type="reaction ID" value="UER00461"/>
</dbReference>
<dbReference type="UniPathway" id="UPA00051">
    <property type="reaction ID" value="UER00462"/>
</dbReference>
<dbReference type="Proteomes" id="UP000000583">
    <property type="component" value="Chromosome"/>
</dbReference>
<dbReference type="Proteomes" id="UP000000801">
    <property type="component" value="Chromosome"/>
</dbReference>
<dbReference type="GO" id="GO:0005829">
    <property type="term" value="C:cytosol"/>
    <property type="evidence" value="ECO:0007669"/>
    <property type="project" value="TreeGrafter"/>
</dbReference>
<dbReference type="GO" id="GO:0004072">
    <property type="term" value="F:aspartate kinase activity"/>
    <property type="evidence" value="ECO:0007669"/>
    <property type="project" value="UniProtKB-EC"/>
</dbReference>
<dbReference type="GO" id="GO:0005524">
    <property type="term" value="F:ATP binding"/>
    <property type="evidence" value="ECO:0007669"/>
    <property type="project" value="UniProtKB-KW"/>
</dbReference>
<dbReference type="GO" id="GO:0019877">
    <property type="term" value="P:diaminopimelate biosynthetic process"/>
    <property type="evidence" value="ECO:0007669"/>
    <property type="project" value="UniProtKB-KW"/>
</dbReference>
<dbReference type="GO" id="GO:0009090">
    <property type="term" value="P:homoserine biosynthetic process"/>
    <property type="evidence" value="ECO:0007669"/>
    <property type="project" value="TreeGrafter"/>
</dbReference>
<dbReference type="GO" id="GO:0009089">
    <property type="term" value="P:lysine biosynthetic process via diaminopimelate"/>
    <property type="evidence" value="ECO:0007669"/>
    <property type="project" value="UniProtKB-UniPathway"/>
</dbReference>
<dbReference type="GO" id="GO:0009088">
    <property type="term" value="P:threonine biosynthetic process"/>
    <property type="evidence" value="ECO:0007669"/>
    <property type="project" value="UniProtKB-UniPathway"/>
</dbReference>
<dbReference type="CDD" id="cd04243">
    <property type="entry name" value="AAK_AK-HSDH-like"/>
    <property type="match status" value="1"/>
</dbReference>
<dbReference type="Gene3D" id="3.30.70.260">
    <property type="match status" value="2"/>
</dbReference>
<dbReference type="Gene3D" id="3.40.1160.10">
    <property type="entry name" value="Acetylglutamate kinase-like"/>
    <property type="match status" value="1"/>
</dbReference>
<dbReference type="Gene3D" id="1.20.120.1320">
    <property type="entry name" value="Aspartokinase, catalytic domain"/>
    <property type="match status" value="1"/>
</dbReference>
<dbReference type="InterPro" id="IPR036393">
    <property type="entry name" value="AceGlu_kinase-like_sf"/>
</dbReference>
<dbReference type="InterPro" id="IPR001048">
    <property type="entry name" value="Asp/Glu/Uridylate_kinase"/>
</dbReference>
<dbReference type="InterPro" id="IPR005260">
    <property type="entry name" value="Asp_kin_monofn"/>
</dbReference>
<dbReference type="InterPro" id="IPR001341">
    <property type="entry name" value="Asp_kinase"/>
</dbReference>
<dbReference type="InterPro" id="IPR042199">
    <property type="entry name" value="AsparK_Bifunc_asparK/hSer_DH"/>
</dbReference>
<dbReference type="InterPro" id="IPR018042">
    <property type="entry name" value="Aspartate_kinase_CS"/>
</dbReference>
<dbReference type="NCBIfam" id="TIGR00657">
    <property type="entry name" value="asp_kinases"/>
    <property type="match status" value="1"/>
</dbReference>
<dbReference type="NCBIfam" id="NF004579">
    <property type="entry name" value="PRK05925.1"/>
    <property type="match status" value="1"/>
</dbReference>
<dbReference type="PANTHER" id="PTHR21499">
    <property type="entry name" value="ASPARTATE KINASE"/>
    <property type="match status" value="1"/>
</dbReference>
<dbReference type="PANTHER" id="PTHR21499:SF3">
    <property type="entry name" value="ASPARTOKINASE"/>
    <property type="match status" value="1"/>
</dbReference>
<dbReference type="Pfam" id="PF00696">
    <property type="entry name" value="AA_kinase"/>
    <property type="match status" value="1"/>
</dbReference>
<dbReference type="PIRSF" id="PIRSF000726">
    <property type="entry name" value="Asp_kin"/>
    <property type="match status" value="1"/>
</dbReference>
<dbReference type="SUPFAM" id="SSF53633">
    <property type="entry name" value="Carbamate kinase-like"/>
    <property type="match status" value="1"/>
</dbReference>
<dbReference type="PROSITE" id="PS00324">
    <property type="entry name" value="ASPARTOKINASE"/>
    <property type="match status" value="1"/>
</dbReference>
<name>AK_CHLPN</name>
<proteinExistence type="inferred from homology"/>
<accession>Q9Z6L0</accession>
<accession>Q9JQD3</accession>
<accession>Q9K1X9</accession>
<evidence type="ECO:0000305" key="1"/>